<protein>
    <recommendedName>
        <fullName evidence="1">Bifunctional uridylyltransferase/uridylyl-removing enzyme</fullName>
        <shortName evidence="1">UTase/UR</shortName>
    </recommendedName>
    <alternativeName>
        <fullName evidence="1">Bifunctional [protein-PII] modification enzyme</fullName>
    </alternativeName>
    <alternativeName>
        <fullName evidence="1">Bifunctional nitrogen sensor protein</fullName>
    </alternativeName>
    <domain>
        <recommendedName>
            <fullName evidence="1">[Protein-PII] uridylyltransferase</fullName>
            <shortName evidence="1">PII uridylyltransferase</shortName>
            <shortName evidence="1">UTase</shortName>
            <ecNumber evidence="1">2.7.7.59</ecNumber>
        </recommendedName>
    </domain>
    <domain>
        <recommendedName>
            <fullName evidence="1">[Protein-PII]-UMP uridylyl-removing enzyme</fullName>
            <shortName evidence="1">UR</shortName>
            <ecNumber evidence="1">3.1.4.-</ecNumber>
        </recommendedName>
    </domain>
</protein>
<organism>
    <name type="scientific">Escherichia coli O45:K1 (strain S88 / ExPEC)</name>
    <dbReference type="NCBI Taxonomy" id="585035"/>
    <lineage>
        <taxon>Bacteria</taxon>
        <taxon>Pseudomonadati</taxon>
        <taxon>Pseudomonadota</taxon>
        <taxon>Gammaproteobacteria</taxon>
        <taxon>Enterobacterales</taxon>
        <taxon>Enterobacteriaceae</taxon>
        <taxon>Escherichia</taxon>
    </lineage>
</organism>
<name>GLND_ECO45</name>
<proteinExistence type="inferred from homology"/>
<gene>
    <name evidence="1" type="primary">glnD</name>
    <name type="ordered locus">ECS88_0176</name>
</gene>
<dbReference type="EC" id="2.7.7.59" evidence="1"/>
<dbReference type="EC" id="3.1.4.-" evidence="1"/>
<dbReference type="EMBL" id="CU928161">
    <property type="protein sequence ID" value="CAR01541.1"/>
    <property type="molecule type" value="Genomic_DNA"/>
</dbReference>
<dbReference type="RefSeq" id="WP_001094597.1">
    <property type="nucleotide sequence ID" value="NC_011742.1"/>
</dbReference>
<dbReference type="SMR" id="B7MBE8"/>
<dbReference type="KEGG" id="ecz:ECS88_0176"/>
<dbReference type="HOGENOM" id="CLU_012833_0_0_6"/>
<dbReference type="Proteomes" id="UP000000747">
    <property type="component" value="Chromosome"/>
</dbReference>
<dbReference type="GO" id="GO:0008773">
    <property type="term" value="F:[protein-PII] uridylyltransferase activity"/>
    <property type="evidence" value="ECO:0007669"/>
    <property type="project" value="UniProtKB-UniRule"/>
</dbReference>
<dbReference type="GO" id="GO:0008081">
    <property type="term" value="F:phosphoric diester hydrolase activity"/>
    <property type="evidence" value="ECO:0007669"/>
    <property type="project" value="UniProtKB-UniRule"/>
</dbReference>
<dbReference type="GO" id="GO:0006808">
    <property type="term" value="P:regulation of nitrogen utilization"/>
    <property type="evidence" value="ECO:0007669"/>
    <property type="project" value="UniProtKB-UniRule"/>
</dbReference>
<dbReference type="CDD" id="cd04899">
    <property type="entry name" value="ACT_ACR-UUR-like_2"/>
    <property type="match status" value="1"/>
</dbReference>
<dbReference type="CDD" id="cd04900">
    <property type="entry name" value="ACT_UUR-like_1"/>
    <property type="match status" value="1"/>
</dbReference>
<dbReference type="CDD" id="cd00077">
    <property type="entry name" value="HDc"/>
    <property type="match status" value="1"/>
</dbReference>
<dbReference type="CDD" id="cd05401">
    <property type="entry name" value="NT_GlnE_GlnD_like"/>
    <property type="match status" value="1"/>
</dbReference>
<dbReference type="FunFam" id="1.10.3210.10:FF:000005">
    <property type="entry name" value="Bifunctional uridylyltransferase/uridylyl-removing enzyme"/>
    <property type="match status" value="1"/>
</dbReference>
<dbReference type="Gene3D" id="1.10.3210.10">
    <property type="entry name" value="Hypothetical protein af1432"/>
    <property type="match status" value="1"/>
</dbReference>
<dbReference type="HAMAP" id="MF_00277">
    <property type="entry name" value="PII_uridylyl_transf"/>
    <property type="match status" value="1"/>
</dbReference>
<dbReference type="InterPro" id="IPR045865">
    <property type="entry name" value="ACT-like_dom_sf"/>
</dbReference>
<dbReference type="InterPro" id="IPR002912">
    <property type="entry name" value="ACT_dom"/>
</dbReference>
<dbReference type="InterPro" id="IPR003607">
    <property type="entry name" value="HD/PDEase_dom"/>
</dbReference>
<dbReference type="InterPro" id="IPR006674">
    <property type="entry name" value="HD_domain"/>
</dbReference>
<dbReference type="InterPro" id="IPR043519">
    <property type="entry name" value="NT_sf"/>
</dbReference>
<dbReference type="InterPro" id="IPR013546">
    <property type="entry name" value="PII_UdlTrfase/GS_AdlTrfase"/>
</dbReference>
<dbReference type="InterPro" id="IPR002934">
    <property type="entry name" value="Polymerase_NTP_transf_dom"/>
</dbReference>
<dbReference type="InterPro" id="IPR010043">
    <property type="entry name" value="UTase/UR"/>
</dbReference>
<dbReference type="NCBIfam" id="NF002487">
    <property type="entry name" value="PRK01759.1"/>
    <property type="match status" value="1"/>
</dbReference>
<dbReference type="NCBIfam" id="NF003448">
    <property type="entry name" value="PRK05007.1"/>
    <property type="match status" value="1"/>
</dbReference>
<dbReference type="NCBIfam" id="TIGR01693">
    <property type="entry name" value="UTase_glnD"/>
    <property type="match status" value="1"/>
</dbReference>
<dbReference type="PANTHER" id="PTHR47320">
    <property type="entry name" value="BIFUNCTIONAL URIDYLYLTRANSFERASE/URIDYLYL-REMOVING ENZYME"/>
    <property type="match status" value="1"/>
</dbReference>
<dbReference type="PANTHER" id="PTHR47320:SF1">
    <property type="entry name" value="BIFUNCTIONAL URIDYLYLTRANSFERASE_URIDYLYL-REMOVING ENZYME"/>
    <property type="match status" value="1"/>
</dbReference>
<dbReference type="Pfam" id="PF01842">
    <property type="entry name" value="ACT"/>
    <property type="match status" value="2"/>
</dbReference>
<dbReference type="Pfam" id="PF08335">
    <property type="entry name" value="GlnD_UR_UTase"/>
    <property type="match status" value="1"/>
</dbReference>
<dbReference type="Pfam" id="PF01966">
    <property type="entry name" value="HD"/>
    <property type="match status" value="1"/>
</dbReference>
<dbReference type="Pfam" id="PF01909">
    <property type="entry name" value="NTP_transf_2"/>
    <property type="match status" value="1"/>
</dbReference>
<dbReference type="PIRSF" id="PIRSF006288">
    <property type="entry name" value="PII_uridyltransf"/>
    <property type="match status" value="1"/>
</dbReference>
<dbReference type="SMART" id="SM00471">
    <property type="entry name" value="HDc"/>
    <property type="match status" value="1"/>
</dbReference>
<dbReference type="SUPFAM" id="SSF55021">
    <property type="entry name" value="ACT-like"/>
    <property type="match status" value="2"/>
</dbReference>
<dbReference type="SUPFAM" id="SSF109604">
    <property type="entry name" value="HD-domain/PDEase-like"/>
    <property type="match status" value="1"/>
</dbReference>
<dbReference type="SUPFAM" id="SSF81301">
    <property type="entry name" value="Nucleotidyltransferase"/>
    <property type="match status" value="1"/>
</dbReference>
<dbReference type="SUPFAM" id="SSF81593">
    <property type="entry name" value="Nucleotidyltransferase substrate binding subunit/domain"/>
    <property type="match status" value="1"/>
</dbReference>
<dbReference type="PROSITE" id="PS51671">
    <property type="entry name" value="ACT"/>
    <property type="match status" value="2"/>
</dbReference>
<dbReference type="PROSITE" id="PS51831">
    <property type="entry name" value="HD"/>
    <property type="match status" value="1"/>
</dbReference>
<evidence type="ECO:0000255" key="1">
    <source>
        <dbReference type="HAMAP-Rule" id="MF_00277"/>
    </source>
</evidence>
<evidence type="ECO:0000255" key="2">
    <source>
        <dbReference type="PROSITE-ProRule" id="PRU01175"/>
    </source>
</evidence>
<feature type="chain" id="PRO_1000119362" description="Bifunctional uridylyltransferase/uridylyl-removing enzyme">
    <location>
        <begin position="1"/>
        <end position="890"/>
    </location>
</feature>
<feature type="domain" description="HD" evidence="2">
    <location>
        <begin position="468"/>
        <end position="590"/>
    </location>
</feature>
<feature type="domain" description="ACT 1" evidence="1">
    <location>
        <begin position="709"/>
        <end position="789"/>
    </location>
</feature>
<feature type="domain" description="ACT 2" evidence="1">
    <location>
        <begin position="816"/>
        <end position="890"/>
    </location>
</feature>
<feature type="region of interest" description="Uridylyltransferase">
    <location>
        <begin position="1"/>
        <end position="349"/>
    </location>
</feature>
<feature type="region of interest" description="Uridylyl-removing">
    <location>
        <begin position="350"/>
        <end position="708"/>
    </location>
</feature>
<sequence length="890" mass="102358">MNTLPEQYANTALPTLSGQPQNPCAWPRDELTVGGIKAHIDTFQRWLGDAFDNGISAEQLIEARTEFIDQLLQRLWIEAGFSQIADLALVAVGGYGRGELHPLSDIDLLILSRKKLPDDQAQKVGELLTLLWDVKLEVGHSVRTLEECMLEGLSDLTVATNLIESRLLIGDVALFLELQKHIFSEGFWPSDKFYAAKVEEQNQRHQRYHGTSYNLEPDIKSSPGGLRDIHTLQWVARRHFGATSLDEMVGFGFLTSAERAELNECLHILWRIRFALHLVVSRYDNRLLFDRQLSVAQRLNYSGEGNEPVERMMKDYFRVTRRVSELNQMLLQLFDEAILALPADEKPRPIDDEFQLRGTLIDLRDETLFMRQPEAILRMFYTMVRNSAITGIYSTTLRQLRHARRHLQQPLCNIPEARKLFLSILRHPGAVRRGLLPMHRHSVLGAYMPQWSHIVGQMQFDLFHAYTVDEHTIRVMLKLESFASEETRQRHPLCVDVWPRLPSTELIFIAALFHDIAKGRGGDHSILGAQDVVHFAELHGLNSRETQLVAWLVRQHLLMSVTAQRRDIQDPEVIKQFAEEVQTENRLRYLVCLTVADICATNETLWNSWKQSLLRELYFATEKQLRRGMQNTPDMRERVRHHQLQALALLRMDNIDEEALHQIWSRCRANYFVRHSPNQLAWHARHLLQHDLSKPLVLLSPQATRGGTEIFIWSPDRPYLFAAVCAELDRRNLSVHDAQIFTTRDGMAMDTFIVLEPDGSPLSADRHEVIRFGLEQVLTQSSWQPPQPRRQPAKLRHFTVETEVTFLPTHTDRKSFLELIALDQPGLLARVGKIFADLGISLHGARITTIGERVEDLFIIATADRRALNNELQQEVHQRLTEALNPNDKG</sequence>
<comment type="function">
    <text evidence="1">Modifies, by uridylylation and deuridylylation, the PII regulatory proteins (GlnB and homologs), in response to the nitrogen status of the cell that GlnD senses through the glutamine level. Under low glutamine levels, catalyzes the conversion of the PII proteins and UTP to PII-UMP and PPi, while under higher glutamine levels, GlnD hydrolyzes PII-UMP to PII and UMP (deuridylylation). Thus, controls uridylylation state and activity of the PII proteins, and plays an important role in the regulation of nitrogen assimilation and metabolism.</text>
</comment>
<comment type="catalytic activity">
    <reaction evidence="1">
        <text>[protein-PII]-L-tyrosine + UTP = [protein-PII]-uridylyl-L-tyrosine + diphosphate</text>
        <dbReference type="Rhea" id="RHEA:13673"/>
        <dbReference type="Rhea" id="RHEA-COMP:12147"/>
        <dbReference type="Rhea" id="RHEA-COMP:12148"/>
        <dbReference type="ChEBI" id="CHEBI:33019"/>
        <dbReference type="ChEBI" id="CHEBI:46398"/>
        <dbReference type="ChEBI" id="CHEBI:46858"/>
        <dbReference type="ChEBI" id="CHEBI:90602"/>
        <dbReference type="EC" id="2.7.7.59"/>
    </reaction>
</comment>
<comment type="catalytic activity">
    <reaction evidence="1">
        <text>[protein-PII]-uridylyl-L-tyrosine + H2O = [protein-PII]-L-tyrosine + UMP + H(+)</text>
        <dbReference type="Rhea" id="RHEA:48600"/>
        <dbReference type="Rhea" id="RHEA-COMP:12147"/>
        <dbReference type="Rhea" id="RHEA-COMP:12148"/>
        <dbReference type="ChEBI" id="CHEBI:15377"/>
        <dbReference type="ChEBI" id="CHEBI:15378"/>
        <dbReference type="ChEBI" id="CHEBI:46858"/>
        <dbReference type="ChEBI" id="CHEBI:57865"/>
        <dbReference type="ChEBI" id="CHEBI:90602"/>
    </reaction>
</comment>
<comment type="cofactor">
    <cofactor evidence="1">
        <name>Mg(2+)</name>
        <dbReference type="ChEBI" id="CHEBI:18420"/>
    </cofactor>
</comment>
<comment type="activity regulation">
    <text evidence="1">Uridylyltransferase (UTase) activity is inhibited by glutamine, while glutamine activates uridylyl-removing (UR) activity.</text>
</comment>
<comment type="domain">
    <text evidence="1">Has four distinct domains: an N-terminal nucleotidyltransferase (NT) domain responsible for UTase activity, a central HD domain that encodes UR activity, and two C-terminal ACT domains that seem to have a role in glutamine sensing.</text>
</comment>
<comment type="similarity">
    <text evidence="1">Belongs to the GlnD family.</text>
</comment>
<keyword id="KW-0378">Hydrolase</keyword>
<keyword id="KW-0460">Magnesium</keyword>
<keyword id="KW-0511">Multifunctional enzyme</keyword>
<keyword id="KW-0548">Nucleotidyltransferase</keyword>
<keyword id="KW-1185">Reference proteome</keyword>
<keyword id="KW-0677">Repeat</keyword>
<keyword id="KW-0808">Transferase</keyword>
<accession>B7MBE8</accession>
<reference key="1">
    <citation type="journal article" date="2009" name="PLoS Genet.">
        <title>Organised genome dynamics in the Escherichia coli species results in highly diverse adaptive paths.</title>
        <authorList>
            <person name="Touchon M."/>
            <person name="Hoede C."/>
            <person name="Tenaillon O."/>
            <person name="Barbe V."/>
            <person name="Baeriswyl S."/>
            <person name="Bidet P."/>
            <person name="Bingen E."/>
            <person name="Bonacorsi S."/>
            <person name="Bouchier C."/>
            <person name="Bouvet O."/>
            <person name="Calteau A."/>
            <person name="Chiapello H."/>
            <person name="Clermont O."/>
            <person name="Cruveiller S."/>
            <person name="Danchin A."/>
            <person name="Diard M."/>
            <person name="Dossat C."/>
            <person name="Karoui M.E."/>
            <person name="Frapy E."/>
            <person name="Garry L."/>
            <person name="Ghigo J.M."/>
            <person name="Gilles A.M."/>
            <person name="Johnson J."/>
            <person name="Le Bouguenec C."/>
            <person name="Lescat M."/>
            <person name="Mangenot S."/>
            <person name="Martinez-Jehanne V."/>
            <person name="Matic I."/>
            <person name="Nassif X."/>
            <person name="Oztas S."/>
            <person name="Petit M.A."/>
            <person name="Pichon C."/>
            <person name="Rouy Z."/>
            <person name="Ruf C.S."/>
            <person name="Schneider D."/>
            <person name="Tourret J."/>
            <person name="Vacherie B."/>
            <person name="Vallenet D."/>
            <person name="Medigue C."/>
            <person name="Rocha E.P.C."/>
            <person name="Denamur E."/>
        </authorList>
    </citation>
    <scope>NUCLEOTIDE SEQUENCE [LARGE SCALE GENOMIC DNA]</scope>
    <source>
        <strain>S88 / ExPEC</strain>
    </source>
</reference>